<feature type="chain" id="PRO_0000102509" description="Endoribonuclease YbeY">
    <location>
        <begin position="1"/>
        <end position="180"/>
    </location>
</feature>
<feature type="binding site" evidence="1">
    <location>
        <position position="149"/>
    </location>
    <ligand>
        <name>Zn(2+)</name>
        <dbReference type="ChEBI" id="CHEBI:29105"/>
        <note>catalytic</note>
    </ligand>
</feature>
<feature type="binding site" evidence="1">
    <location>
        <position position="153"/>
    </location>
    <ligand>
        <name>Zn(2+)</name>
        <dbReference type="ChEBI" id="CHEBI:29105"/>
        <note>catalytic</note>
    </ligand>
</feature>
<feature type="binding site" evidence="1">
    <location>
        <position position="159"/>
    </location>
    <ligand>
        <name>Zn(2+)</name>
        <dbReference type="ChEBI" id="CHEBI:29105"/>
        <note>catalytic</note>
    </ligand>
</feature>
<protein>
    <recommendedName>
        <fullName evidence="1">Endoribonuclease YbeY</fullName>
        <ecNumber evidence="1">3.1.-.-</ecNumber>
    </recommendedName>
</protein>
<comment type="function">
    <text evidence="1">Single strand-specific metallo-endoribonuclease involved in late-stage 70S ribosome quality control and in maturation of the 3' terminus of the 16S rRNA.</text>
</comment>
<comment type="cofactor">
    <cofactor evidence="1">
        <name>Zn(2+)</name>
        <dbReference type="ChEBI" id="CHEBI:29105"/>
    </cofactor>
    <text evidence="1">Binds 1 zinc ion.</text>
</comment>
<comment type="subcellular location">
    <subcellularLocation>
        <location evidence="1">Cytoplasm</location>
    </subcellularLocation>
</comment>
<comment type="similarity">
    <text evidence="1">Belongs to the endoribonuclease YbeY family.</text>
</comment>
<accession>Q7V3A1</accession>
<gene>
    <name evidence="1" type="primary">ybeY</name>
    <name type="ordered locus">PMM0182</name>
</gene>
<evidence type="ECO:0000255" key="1">
    <source>
        <dbReference type="HAMAP-Rule" id="MF_00009"/>
    </source>
</evidence>
<name>YBEY_PROMP</name>
<sequence length="180" mass="21210">MYQKDLYDLQIDLVFKCNDFSNLSNHFINKSDNIIFESGFWEEVLLCWIKIILDEKDTSFPNFILYKKSFSLSLQIINDNEISSINQKWMNKSGSTDVLSFPIISDEDTTKDLNFIELGDLFISLETAFKQSLEFNHSIKKEMLWLASHGLLHLLGWEHNDDYELDNMLNFQEYLISKLD</sequence>
<reference key="1">
    <citation type="journal article" date="2003" name="Nature">
        <title>Genome divergence in two Prochlorococcus ecotypes reflects oceanic niche differentiation.</title>
        <authorList>
            <person name="Rocap G."/>
            <person name="Larimer F.W."/>
            <person name="Lamerdin J.E."/>
            <person name="Malfatti S."/>
            <person name="Chain P."/>
            <person name="Ahlgren N.A."/>
            <person name="Arellano A."/>
            <person name="Coleman M."/>
            <person name="Hauser L."/>
            <person name="Hess W.R."/>
            <person name="Johnson Z.I."/>
            <person name="Land M.L."/>
            <person name="Lindell D."/>
            <person name="Post A.F."/>
            <person name="Regala W."/>
            <person name="Shah M."/>
            <person name="Shaw S.L."/>
            <person name="Steglich C."/>
            <person name="Sullivan M.B."/>
            <person name="Ting C.S."/>
            <person name="Tolonen A."/>
            <person name="Webb E.A."/>
            <person name="Zinser E.R."/>
            <person name="Chisholm S.W."/>
        </authorList>
    </citation>
    <scope>NUCLEOTIDE SEQUENCE [LARGE SCALE GENOMIC DNA]</scope>
    <source>
        <strain>CCMP1986 / NIES-2087 / MED4</strain>
    </source>
</reference>
<keyword id="KW-0963">Cytoplasm</keyword>
<keyword id="KW-0255">Endonuclease</keyword>
<keyword id="KW-0378">Hydrolase</keyword>
<keyword id="KW-0479">Metal-binding</keyword>
<keyword id="KW-0540">Nuclease</keyword>
<keyword id="KW-0690">Ribosome biogenesis</keyword>
<keyword id="KW-0698">rRNA processing</keyword>
<keyword id="KW-0862">Zinc</keyword>
<organism>
    <name type="scientific">Prochlorococcus marinus subsp. pastoris (strain CCMP1986 / NIES-2087 / MED4)</name>
    <dbReference type="NCBI Taxonomy" id="59919"/>
    <lineage>
        <taxon>Bacteria</taxon>
        <taxon>Bacillati</taxon>
        <taxon>Cyanobacteriota</taxon>
        <taxon>Cyanophyceae</taxon>
        <taxon>Synechococcales</taxon>
        <taxon>Prochlorococcaceae</taxon>
        <taxon>Prochlorococcus</taxon>
    </lineage>
</organism>
<proteinExistence type="inferred from homology"/>
<dbReference type="EC" id="3.1.-.-" evidence="1"/>
<dbReference type="EMBL" id="BX548174">
    <property type="protein sequence ID" value="CAE18641.1"/>
    <property type="molecule type" value="Genomic_DNA"/>
</dbReference>
<dbReference type="RefSeq" id="WP_011131821.1">
    <property type="nucleotide sequence ID" value="NC_005072.1"/>
</dbReference>
<dbReference type="SMR" id="Q7V3A1"/>
<dbReference type="STRING" id="59919.PMM0182"/>
<dbReference type="KEGG" id="pmm:PMM0182"/>
<dbReference type="eggNOG" id="COG0319">
    <property type="taxonomic scope" value="Bacteria"/>
</dbReference>
<dbReference type="HOGENOM" id="CLU_106710_3_0_3"/>
<dbReference type="OrthoDB" id="9807740at2"/>
<dbReference type="Proteomes" id="UP000001026">
    <property type="component" value="Chromosome"/>
</dbReference>
<dbReference type="GO" id="GO:0005737">
    <property type="term" value="C:cytoplasm"/>
    <property type="evidence" value="ECO:0007669"/>
    <property type="project" value="UniProtKB-SubCell"/>
</dbReference>
<dbReference type="GO" id="GO:0004222">
    <property type="term" value="F:metalloendopeptidase activity"/>
    <property type="evidence" value="ECO:0007669"/>
    <property type="project" value="InterPro"/>
</dbReference>
<dbReference type="GO" id="GO:0004521">
    <property type="term" value="F:RNA endonuclease activity"/>
    <property type="evidence" value="ECO:0007669"/>
    <property type="project" value="UniProtKB-UniRule"/>
</dbReference>
<dbReference type="GO" id="GO:0008270">
    <property type="term" value="F:zinc ion binding"/>
    <property type="evidence" value="ECO:0007669"/>
    <property type="project" value="UniProtKB-UniRule"/>
</dbReference>
<dbReference type="GO" id="GO:0006364">
    <property type="term" value="P:rRNA processing"/>
    <property type="evidence" value="ECO:0007669"/>
    <property type="project" value="UniProtKB-UniRule"/>
</dbReference>
<dbReference type="Gene3D" id="3.40.390.30">
    <property type="entry name" value="Metalloproteases ('zincins'), catalytic domain"/>
    <property type="match status" value="1"/>
</dbReference>
<dbReference type="HAMAP" id="MF_00009">
    <property type="entry name" value="Endoribonucl_YbeY"/>
    <property type="match status" value="1"/>
</dbReference>
<dbReference type="InterPro" id="IPR023091">
    <property type="entry name" value="MetalPrtase_cat_dom_sf_prd"/>
</dbReference>
<dbReference type="InterPro" id="IPR002036">
    <property type="entry name" value="YbeY"/>
</dbReference>
<dbReference type="InterPro" id="IPR020549">
    <property type="entry name" value="YbeY_CS"/>
</dbReference>
<dbReference type="NCBIfam" id="TIGR00043">
    <property type="entry name" value="rRNA maturation RNase YbeY"/>
    <property type="match status" value="1"/>
</dbReference>
<dbReference type="PANTHER" id="PTHR46986">
    <property type="entry name" value="ENDORIBONUCLEASE YBEY, CHLOROPLASTIC"/>
    <property type="match status" value="1"/>
</dbReference>
<dbReference type="PANTHER" id="PTHR46986:SF1">
    <property type="entry name" value="ENDORIBONUCLEASE YBEY, CHLOROPLASTIC"/>
    <property type="match status" value="1"/>
</dbReference>
<dbReference type="Pfam" id="PF02130">
    <property type="entry name" value="YbeY"/>
    <property type="match status" value="1"/>
</dbReference>
<dbReference type="SUPFAM" id="SSF55486">
    <property type="entry name" value="Metalloproteases ('zincins'), catalytic domain"/>
    <property type="match status" value="1"/>
</dbReference>
<dbReference type="PROSITE" id="PS01306">
    <property type="entry name" value="UPF0054"/>
    <property type="match status" value="1"/>
</dbReference>